<accession>Q8VCN6</accession>
<accession>Q4L299</accession>
<accession>Q4L2A4</accession>
<accession>Q8BLN1</accession>
<evidence type="ECO:0000255" key="1"/>
<evidence type="ECO:0000256" key="2">
    <source>
        <dbReference type="SAM" id="MobiDB-lite"/>
    </source>
</evidence>
<evidence type="ECO:0000269" key="3">
    <source>
    </source>
</evidence>
<evidence type="ECO:0000269" key="4">
    <source>
    </source>
</evidence>
<evidence type="ECO:0000269" key="5">
    <source>
    </source>
</evidence>
<evidence type="ECO:0000269" key="6">
    <source>
    </source>
</evidence>
<evidence type="ECO:0000305" key="7"/>
<dbReference type="EMBL" id="AY262359">
    <property type="protein sequence ID" value="AAP91691.1"/>
    <property type="molecule type" value="Genomic_DNA"/>
</dbReference>
<dbReference type="EMBL" id="AY262355">
    <property type="protein sequence ID" value="AAP91687.1"/>
    <property type="molecule type" value="mRNA"/>
</dbReference>
<dbReference type="EMBL" id="AK044051">
    <property type="protein sequence ID" value="BAC31754.1"/>
    <property type="molecule type" value="mRNA"/>
</dbReference>
<dbReference type="EMBL" id="BC019482">
    <property type="protein sequence ID" value="AAH19482.1"/>
    <property type="molecule type" value="mRNA"/>
</dbReference>
<dbReference type="RefSeq" id="NP_079860.2">
    <property type="nucleotide sequence ID" value="NM_025584.2"/>
</dbReference>
<dbReference type="FunCoup" id="Q8VCN6">
    <property type="interactions" value="273"/>
</dbReference>
<dbReference type="IntAct" id="Q8VCN6">
    <property type="interactions" value="3"/>
</dbReference>
<dbReference type="STRING" id="10090.ENSMUSP00000137004"/>
<dbReference type="PhosphoSitePlus" id="Q8VCN6"/>
<dbReference type="SwissPalm" id="Q8VCN6"/>
<dbReference type="jPOST" id="Q8VCN6"/>
<dbReference type="ProteomicsDB" id="283754"/>
<dbReference type="Pumba" id="Q8VCN6"/>
<dbReference type="DNASU" id="673094"/>
<dbReference type="GeneID" id="673094"/>
<dbReference type="KEGG" id="mmu:673094"/>
<dbReference type="AGR" id="MGI:1913728"/>
<dbReference type="CTD" id="4267"/>
<dbReference type="MGI" id="MGI:1913728">
    <property type="gene designation" value="Cd99"/>
</dbReference>
<dbReference type="InParanoid" id="Q8VCN6"/>
<dbReference type="PRO" id="PR:Q8VCN6"/>
<dbReference type="Proteomes" id="UP000000589">
    <property type="component" value="Unplaced"/>
</dbReference>
<dbReference type="RNAct" id="Q8VCN6">
    <property type="molecule type" value="protein"/>
</dbReference>
<dbReference type="GO" id="GO:0009986">
    <property type="term" value="C:cell surface"/>
    <property type="evidence" value="ECO:0000314"/>
    <property type="project" value="MGI"/>
</dbReference>
<dbReference type="GO" id="GO:0005886">
    <property type="term" value="C:plasma membrane"/>
    <property type="evidence" value="ECO:0000304"/>
    <property type="project" value="Reactome"/>
</dbReference>
<dbReference type="GO" id="GO:0034109">
    <property type="term" value="P:homotypic cell-cell adhesion"/>
    <property type="evidence" value="ECO:0000314"/>
    <property type="project" value="MGI"/>
</dbReference>
<dbReference type="GO" id="GO:0001773">
    <property type="term" value="P:myeloid dendritic cell activation"/>
    <property type="evidence" value="ECO:0000314"/>
    <property type="project" value="MGI"/>
</dbReference>
<dbReference type="GO" id="GO:2000391">
    <property type="term" value="P:positive regulation of neutrophil extravasation"/>
    <property type="evidence" value="ECO:0000315"/>
    <property type="project" value="MGI"/>
</dbReference>
<dbReference type="GO" id="GO:0072683">
    <property type="term" value="P:T cell extravasation"/>
    <property type="evidence" value="ECO:0000315"/>
    <property type="project" value="MGI"/>
</dbReference>
<dbReference type="InterPro" id="IPR022078">
    <property type="entry name" value="CD99L2"/>
</dbReference>
<dbReference type="PANTHER" id="PTHR15076:SF15">
    <property type="entry name" value="CD99 ANTIGEN"/>
    <property type="match status" value="1"/>
</dbReference>
<dbReference type="PANTHER" id="PTHR15076">
    <property type="entry name" value="CD99/MIC2 PROTEIN RELATED"/>
    <property type="match status" value="1"/>
</dbReference>
<dbReference type="Pfam" id="PF12301">
    <property type="entry name" value="CD99L2"/>
    <property type="match status" value="1"/>
</dbReference>
<reference key="1">
    <citation type="journal article" date="2004" name="J. Exp. Med.">
        <title>Activation of natural killer cells and dendritic cells upon recognition of a novel CD99-like ligand by paired immunoglobulin-like type 2 receptor.</title>
        <authorList>
            <person name="Shiratori I."/>
            <person name="Ogasawara K."/>
            <person name="Saito T."/>
            <person name="Lanier L.L."/>
            <person name="Arase H."/>
        </authorList>
    </citation>
    <scope>NUCLEOTIDE SEQUENCE [MRNA]</scope>
    <scope>TISSUE SPECIFICITY</scope>
    <scope>INTERACTION WITH PILRB</scope>
</reference>
<reference key="2">
    <citation type="journal article" date="2005" name="Gene">
        <title>Rapid divergency of rodent CD99 orthologs: implications for the evolution of the pseudoautosomal region.</title>
        <authorList>
            <person name="Park S.H."/>
            <person name="Shin Y.K."/>
            <person name="Suh Y.H."/>
            <person name="Park W.S."/>
            <person name="Ban Y.L."/>
            <person name="Choi H.S."/>
            <person name="Park H.J."/>
            <person name="Jung K.C."/>
        </authorList>
    </citation>
    <scope>NUCLEOTIDE SEQUENCE [GENOMIC DNA / MRNA]</scope>
    <scope>SUBUNIT</scope>
    <source>
        <tissue>Testis</tissue>
    </source>
</reference>
<reference key="3">
    <citation type="journal article" date="2005" name="Science">
        <title>The transcriptional landscape of the mammalian genome.</title>
        <authorList>
            <person name="Carninci P."/>
            <person name="Kasukawa T."/>
            <person name="Katayama S."/>
            <person name="Gough J."/>
            <person name="Frith M.C."/>
            <person name="Maeda N."/>
            <person name="Oyama R."/>
            <person name="Ravasi T."/>
            <person name="Lenhard B."/>
            <person name="Wells C."/>
            <person name="Kodzius R."/>
            <person name="Shimokawa K."/>
            <person name="Bajic V.B."/>
            <person name="Brenner S.E."/>
            <person name="Batalov S."/>
            <person name="Forrest A.R."/>
            <person name="Zavolan M."/>
            <person name="Davis M.J."/>
            <person name="Wilming L.G."/>
            <person name="Aidinis V."/>
            <person name="Allen J.E."/>
            <person name="Ambesi-Impiombato A."/>
            <person name="Apweiler R."/>
            <person name="Aturaliya R.N."/>
            <person name="Bailey T.L."/>
            <person name="Bansal M."/>
            <person name="Baxter L."/>
            <person name="Beisel K.W."/>
            <person name="Bersano T."/>
            <person name="Bono H."/>
            <person name="Chalk A.M."/>
            <person name="Chiu K.P."/>
            <person name="Choudhary V."/>
            <person name="Christoffels A."/>
            <person name="Clutterbuck D.R."/>
            <person name="Crowe M.L."/>
            <person name="Dalla E."/>
            <person name="Dalrymple B.P."/>
            <person name="de Bono B."/>
            <person name="Della Gatta G."/>
            <person name="di Bernardo D."/>
            <person name="Down T."/>
            <person name="Engstrom P."/>
            <person name="Fagiolini M."/>
            <person name="Faulkner G."/>
            <person name="Fletcher C.F."/>
            <person name="Fukushima T."/>
            <person name="Furuno M."/>
            <person name="Futaki S."/>
            <person name="Gariboldi M."/>
            <person name="Georgii-Hemming P."/>
            <person name="Gingeras T.R."/>
            <person name="Gojobori T."/>
            <person name="Green R.E."/>
            <person name="Gustincich S."/>
            <person name="Harbers M."/>
            <person name="Hayashi Y."/>
            <person name="Hensch T.K."/>
            <person name="Hirokawa N."/>
            <person name="Hill D."/>
            <person name="Huminiecki L."/>
            <person name="Iacono M."/>
            <person name="Ikeo K."/>
            <person name="Iwama A."/>
            <person name="Ishikawa T."/>
            <person name="Jakt M."/>
            <person name="Kanapin A."/>
            <person name="Katoh M."/>
            <person name="Kawasawa Y."/>
            <person name="Kelso J."/>
            <person name="Kitamura H."/>
            <person name="Kitano H."/>
            <person name="Kollias G."/>
            <person name="Krishnan S.P."/>
            <person name="Kruger A."/>
            <person name="Kummerfeld S.K."/>
            <person name="Kurochkin I.V."/>
            <person name="Lareau L.F."/>
            <person name="Lazarevic D."/>
            <person name="Lipovich L."/>
            <person name="Liu J."/>
            <person name="Liuni S."/>
            <person name="McWilliam S."/>
            <person name="Madan Babu M."/>
            <person name="Madera M."/>
            <person name="Marchionni L."/>
            <person name="Matsuda H."/>
            <person name="Matsuzawa S."/>
            <person name="Miki H."/>
            <person name="Mignone F."/>
            <person name="Miyake S."/>
            <person name="Morris K."/>
            <person name="Mottagui-Tabar S."/>
            <person name="Mulder N."/>
            <person name="Nakano N."/>
            <person name="Nakauchi H."/>
            <person name="Ng P."/>
            <person name="Nilsson R."/>
            <person name="Nishiguchi S."/>
            <person name="Nishikawa S."/>
            <person name="Nori F."/>
            <person name="Ohara O."/>
            <person name="Okazaki Y."/>
            <person name="Orlando V."/>
            <person name="Pang K.C."/>
            <person name="Pavan W.J."/>
            <person name="Pavesi G."/>
            <person name="Pesole G."/>
            <person name="Petrovsky N."/>
            <person name="Piazza S."/>
            <person name="Reed J."/>
            <person name="Reid J.F."/>
            <person name="Ring B.Z."/>
            <person name="Ringwald M."/>
            <person name="Rost B."/>
            <person name="Ruan Y."/>
            <person name="Salzberg S.L."/>
            <person name="Sandelin A."/>
            <person name="Schneider C."/>
            <person name="Schoenbach C."/>
            <person name="Sekiguchi K."/>
            <person name="Semple C.A."/>
            <person name="Seno S."/>
            <person name="Sessa L."/>
            <person name="Sheng Y."/>
            <person name="Shibata Y."/>
            <person name="Shimada H."/>
            <person name="Shimada K."/>
            <person name="Silva D."/>
            <person name="Sinclair B."/>
            <person name="Sperling S."/>
            <person name="Stupka E."/>
            <person name="Sugiura K."/>
            <person name="Sultana R."/>
            <person name="Takenaka Y."/>
            <person name="Taki K."/>
            <person name="Tammoja K."/>
            <person name="Tan S.L."/>
            <person name="Tang S."/>
            <person name="Taylor M.S."/>
            <person name="Tegner J."/>
            <person name="Teichmann S.A."/>
            <person name="Ueda H.R."/>
            <person name="van Nimwegen E."/>
            <person name="Verardo R."/>
            <person name="Wei C.L."/>
            <person name="Yagi K."/>
            <person name="Yamanishi H."/>
            <person name="Zabarovsky E."/>
            <person name="Zhu S."/>
            <person name="Zimmer A."/>
            <person name="Hide W."/>
            <person name="Bult C."/>
            <person name="Grimmond S.M."/>
            <person name="Teasdale R.D."/>
            <person name="Liu E.T."/>
            <person name="Brusic V."/>
            <person name="Quackenbush J."/>
            <person name="Wahlestedt C."/>
            <person name="Mattick J.S."/>
            <person name="Hume D.A."/>
            <person name="Kai C."/>
            <person name="Sasaki D."/>
            <person name="Tomaru Y."/>
            <person name="Fukuda S."/>
            <person name="Kanamori-Katayama M."/>
            <person name="Suzuki M."/>
            <person name="Aoki J."/>
            <person name="Arakawa T."/>
            <person name="Iida J."/>
            <person name="Imamura K."/>
            <person name="Itoh M."/>
            <person name="Kato T."/>
            <person name="Kawaji H."/>
            <person name="Kawagashira N."/>
            <person name="Kawashima T."/>
            <person name="Kojima M."/>
            <person name="Kondo S."/>
            <person name="Konno H."/>
            <person name="Nakano K."/>
            <person name="Ninomiya N."/>
            <person name="Nishio T."/>
            <person name="Okada M."/>
            <person name="Plessy C."/>
            <person name="Shibata K."/>
            <person name="Shiraki T."/>
            <person name="Suzuki S."/>
            <person name="Tagami M."/>
            <person name="Waki K."/>
            <person name="Watahiki A."/>
            <person name="Okamura-Oho Y."/>
            <person name="Suzuki H."/>
            <person name="Kawai J."/>
            <person name="Hayashizaki Y."/>
        </authorList>
    </citation>
    <scope>NUCLEOTIDE SEQUENCE [LARGE SCALE MRNA]</scope>
    <source>
        <strain>C57BL/6J</strain>
        <tissue>Brain cortex</tissue>
    </source>
</reference>
<reference key="4">
    <citation type="journal article" date="2004" name="Genome Res.">
        <title>The status, quality, and expansion of the NIH full-length cDNA project: the Mammalian Gene Collection (MGC).</title>
        <authorList>
            <consortium name="The MGC Project Team"/>
        </authorList>
    </citation>
    <scope>NUCLEOTIDE SEQUENCE [LARGE SCALE MRNA]</scope>
    <source>
        <strain>FVB/N</strain>
        <tissue>Colon</tissue>
    </source>
</reference>
<reference key="5">
    <citation type="journal article" date="2004" name="Blood">
        <title>Mouse CD99 participates in T-cell recruitment into inflamed skin.</title>
        <authorList>
            <person name="Bixel G."/>
            <person name="Kloep S."/>
            <person name="Butz S."/>
            <person name="Petri B."/>
            <person name="Engelhardt B."/>
            <person name="Vestweber D."/>
        </authorList>
    </citation>
    <scope>FUNCTION</scope>
    <scope>TISSUE SPECIFICITY</scope>
</reference>
<reference key="6">
    <citation type="journal article" date="2010" name="Blood">
        <title>CD99 and CD99L2 act at the same site as, but independently of, PECAM-1 during leukocyte diapedesis.</title>
        <authorList>
            <person name="Bixel M.G."/>
            <person name="Li H."/>
            <person name="Petri B."/>
            <person name="Khandoga A.G."/>
            <person name="Khandoga A."/>
            <person name="Zarbock A."/>
            <person name="Wolburg-Buchholz K."/>
            <person name="Wolburg H."/>
            <person name="Sorokin L."/>
            <person name="Zeuschner D."/>
            <person name="Maerz S."/>
            <person name="Butz S."/>
            <person name="Krombach F."/>
            <person name="Vestweber D."/>
        </authorList>
    </citation>
    <scope>FUNCTION</scope>
</reference>
<name>CD99_MOUSE</name>
<keyword id="KW-0472">Membrane</keyword>
<keyword id="KW-1185">Reference proteome</keyword>
<keyword id="KW-0732">Signal</keyword>
<keyword id="KW-0812">Transmembrane</keyword>
<keyword id="KW-1133">Transmembrane helix</keyword>
<feature type="signal peptide" evidence="1">
    <location>
        <begin position="1"/>
        <end position="28"/>
    </location>
</feature>
<feature type="chain" id="PRO_0000226820" description="CD99 antigen">
    <location>
        <begin position="29"/>
        <end position="175"/>
    </location>
</feature>
<feature type="topological domain" description="Extracellular" evidence="1">
    <location>
        <begin position="29"/>
        <end position="137"/>
    </location>
</feature>
<feature type="transmembrane region" description="Helical" evidence="1">
    <location>
        <begin position="138"/>
        <end position="158"/>
    </location>
</feature>
<feature type="topological domain" description="Cytoplasmic" evidence="1">
    <location>
        <begin position="159"/>
        <end position="175"/>
    </location>
</feature>
<feature type="region of interest" description="Disordered" evidence="2">
    <location>
        <begin position="30"/>
        <end position="137"/>
    </location>
</feature>
<feature type="compositionally biased region" description="Gly residues" evidence="2">
    <location>
        <begin position="65"/>
        <end position="74"/>
    </location>
</feature>
<feature type="compositionally biased region" description="Gly residues" evidence="2">
    <location>
        <begin position="106"/>
        <end position="115"/>
    </location>
</feature>
<feature type="sequence conflict" description="In Ref. 3; BAC31754." evidence="7" ref="3">
    <original>D</original>
    <variation>G</variation>
    <location>
        <position position="100"/>
    </location>
</feature>
<feature type="sequence conflict" description="In Ref. 2; AAP91687/AAP91691 and 3; BAC31754." evidence="7" ref="2 3">
    <location>
        <position position="111"/>
    </location>
</feature>
<feature type="sequence conflict" description="In Ref. 2; AAP91687/AAP91691." evidence="7" ref="2">
    <original>R</original>
    <variation>P</variation>
    <location>
        <position position="114"/>
    </location>
</feature>
<feature type="sequence conflict" description="In Ref. 2; AAP91687." evidence="7" ref="2">
    <original>G</original>
    <variation>R</variation>
    <location>
        <position position="128"/>
    </location>
</feature>
<feature type="sequence conflict" description="In Ref. 3; BAC31754." evidence="7" ref="3">
    <original>AA</original>
    <variation>PP</variation>
    <location>
        <begin position="148"/>
        <end position="149"/>
    </location>
</feature>
<comment type="function">
    <text evidence="4 6">Involved in T-cell adhesion processes. Plays a role in a late step of leukocyte extravasation helping leukocytes to overcome the endothelial basement membrane. Acts at the same site as, but independently of, PECAM1.</text>
</comment>
<comment type="subunit">
    <text evidence="3 5">Homodimer. Interacts with PILRB.</text>
</comment>
<comment type="subcellular location">
    <subcellularLocation>
        <location evidence="7">Membrane</location>
        <topology evidence="7">Single-pass type I membrane protein</topology>
    </subcellularLocation>
</comment>
<comment type="tissue specificity">
    <text evidence="3 4">Widely expressed with high levels in lung, spleen, thymus, liver and spinal cord. Expressed on leukocytes and endothelial cell contacts. Detected in a wide range of T-cells, including CD4-/CD8- and CD4+/CD8+ thymocytes. Expression is much lower in peripheral T-cells than in thymocytes.</text>
</comment>
<comment type="similarity">
    <text evidence="7">Belongs to the CD99 family.</text>
</comment>
<proteinExistence type="evidence at protein level"/>
<gene>
    <name type="primary">Cd99</name>
    <name type="synonym">Pilrl</name>
</gene>
<organism>
    <name type="scientific">Mus musculus</name>
    <name type="common">Mouse</name>
    <dbReference type="NCBI Taxonomy" id="10090"/>
    <lineage>
        <taxon>Eukaryota</taxon>
        <taxon>Metazoa</taxon>
        <taxon>Chordata</taxon>
        <taxon>Craniata</taxon>
        <taxon>Vertebrata</taxon>
        <taxon>Euteleostomi</taxon>
        <taxon>Mammalia</taxon>
        <taxon>Eutheria</taxon>
        <taxon>Euarchontoglires</taxon>
        <taxon>Glires</taxon>
        <taxon>Rodentia</taxon>
        <taxon>Myomorpha</taxon>
        <taxon>Muroidea</taxon>
        <taxon>Muridae</taxon>
        <taxon>Murinae</taxon>
        <taxon>Mus</taxon>
        <taxon>Mus</taxon>
    </lineage>
</organism>
<sequence>MARAAMEAAATVVLALALLGAAARGAASDDFNLGDALEDPNMKPTPKAPTPKKPSGGFDLEDALPGGGGGGAGEKPGNRPQPDPKPPRPHGDSGGISDSDLADAAGQGGGGAGRRGSGDEGGHGGAGGAEPEGTPQGLVPGVVAAVVAAVAGAVSSFVAYQRRRLCFREGGSAPV</sequence>
<protein>
    <recommendedName>
        <fullName>CD99 antigen</fullName>
    </recommendedName>
    <alternativeName>
        <fullName>Paired immunoglobin-like type 2 receptor-ligand</fullName>
        <shortName>PILR-L</shortName>
    </alternativeName>
    <cdAntigenName>CD99</cdAntigenName>
</protein>